<gene>
    <name type="primary">recA</name>
    <name type="ordered locus">Rv2737c</name>
    <name type="ORF">MTV002.02c</name>
</gene>
<keyword id="KW-0002">3D-structure</keyword>
<keyword id="KW-0067">ATP-binding</keyword>
<keyword id="KW-0068">Autocatalytic cleavage</keyword>
<keyword id="KW-0963">Cytoplasm</keyword>
<keyword id="KW-0227">DNA damage</keyword>
<keyword id="KW-0233">DNA recombination</keyword>
<keyword id="KW-0234">DNA repair</keyword>
<keyword id="KW-0238">DNA-binding</keyword>
<keyword id="KW-0255">Endonuclease</keyword>
<keyword id="KW-0378">Hydrolase</keyword>
<keyword id="KW-0404">Intron homing</keyword>
<keyword id="KW-1017">Isopeptide bond</keyword>
<keyword id="KW-0540">Nuclease</keyword>
<keyword id="KW-0547">Nucleotide-binding</keyword>
<keyword id="KW-0651">Protein splicing</keyword>
<keyword id="KW-1185">Reference proteome</keyword>
<keyword id="KW-0742">SOS response</keyword>
<keyword id="KW-0832">Ubl conjugation</keyword>
<evidence type="ECO:0000250" key="1"/>
<evidence type="ECO:0000269" key="2">
    <source>
    </source>
</evidence>
<evidence type="ECO:0000269" key="3">
    <source>
    </source>
</evidence>
<evidence type="ECO:0000269" key="4">
    <source>
    </source>
</evidence>
<evidence type="ECO:0000269" key="5">
    <source>
    </source>
</evidence>
<evidence type="ECO:0000305" key="6"/>
<evidence type="ECO:0007829" key="7">
    <source>
        <dbReference type="PDB" id="2IN0"/>
    </source>
</evidence>
<evidence type="ECO:0007829" key="8">
    <source>
        <dbReference type="PDB" id="2IN8"/>
    </source>
</evidence>
<evidence type="ECO:0007829" key="9">
    <source>
        <dbReference type="PDB" id="4OQF"/>
    </source>
</evidence>
<evidence type="ECO:0007829" key="10">
    <source>
        <dbReference type="PDB" id="4PPF"/>
    </source>
</evidence>
<evidence type="ECO:0007829" key="11">
    <source>
        <dbReference type="PDB" id="5K08"/>
    </source>
</evidence>
<organism>
    <name type="scientific">Mycobacterium tuberculosis (strain ATCC 25618 / H37Rv)</name>
    <dbReference type="NCBI Taxonomy" id="83332"/>
    <lineage>
        <taxon>Bacteria</taxon>
        <taxon>Bacillati</taxon>
        <taxon>Actinomycetota</taxon>
        <taxon>Actinomycetes</taxon>
        <taxon>Mycobacteriales</taxon>
        <taxon>Mycobacteriaceae</taxon>
        <taxon>Mycobacterium</taxon>
        <taxon>Mycobacterium tuberculosis complex</taxon>
    </lineage>
</organism>
<name>RECA_MYCTU</name>
<accession>P9WHJ3</accession>
<accession>L0TAH5</accession>
<accession>O34519</accession>
<accession>P0A5U4</accession>
<accession>P26345</accession>
<dbReference type="EC" id="3.1.-.-"/>
<dbReference type="EMBL" id="X58485">
    <property type="protein sequence ID" value="CAA41395.1"/>
    <property type="molecule type" value="Genomic_DNA"/>
</dbReference>
<dbReference type="EMBL" id="AJ000012">
    <property type="protein sequence ID" value="CAA03857.1"/>
    <property type="molecule type" value="Genomic_DNA"/>
</dbReference>
<dbReference type="EMBL" id="AJ000011">
    <property type="protein sequence ID" value="CAA03856.1"/>
    <property type="molecule type" value="Genomic_DNA"/>
</dbReference>
<dbReference type="EMBL" id="AL123456">
    <property type="protein sequence ID" value="CCP45535.1"/>
    <property type="molecule type" value="Genomic_DNA"/>
</dbReference>
<dbReference type="PIR" id="S18206">
    <property type="entry name" value="S18206"/>
</dbReference>
<dbReference type="RefSeq" id="NP_217253.1">
    <property type="nucleotide sequence ID" value="NC_000962.3"/>
</dbReference>
<dbReference type="RefSeq" id="WP_003414006.1">
    <property type="nucleotide sequence ID" value="NZ_NVQJ01000017.1"/>
</dbReference>
<dbReference type="PDB" id="1G18">
    <property type="method" value="X-ray"/>
    <property type="resolution" value="3.80 A"/>
    <property type="chains" value="A=1-790"/>
</dbReference>
<dbReference type="PDB" id="1G19">
    <property type="method" value="X-ray"/>
    <property type="resolution" value="3.00 A"/>
    <property type="chains" value="A=1-790"/>
</dbReference>
<dbReference type="PDB" id="1MO3">
    <property type="method" value="X-ray"/>
    <property type="resolution" value="3.10 A"/>
    <property type="chains" value="A=1-790"/>
</dbReference>
<dbReference type="PDB" id="1MO4">
    <property type="method" value="X-ray"/>
    <property type="resolution" value="3.20 A"/>
    <property type="chains" value="A=1-790"/>
</dbReference>
<dbReference type="PDB" id="1MO5">
    <property type="method" value="X-ray"/>
    <property type="resolution" value="3.25 A"/>
    <property type="chains" value="A=1-790"/>
</dbReference>
<dbReference type="PDB" id="1MO6">
    <property type="method" value="X-ray"/>
    <property type="resolution" value="3.20 A"/>
    <property type="chains" value="A=1-790"/>
</dbReference>
<dbReference type="PDB" id="2IMZ">
    <property type="method" value="X-ray"/>
    <property type="resolution" value="1.70 A"/>
    <property type="chains" value="A/B=252-691"/>
</dbReference>
<dbReference type="PDB" id="2IN0">
    <property type="method" value="X-ray"/>
    <property type="resolution" value="1.60 A"/>
    <property type="chains" value="A=252-691"/>
</dbReference>
<dbReference type="PDB" id="2IN8">
    <property type="method" value="X-ray"/>
    <property type="resolution" value="1.70 A"/>
    <property type="chains" value="A=252-691"/>
</dbReference>
<dbReference type="PDB" id="2IN9">
    <property type="method" value="X-ray"/>
    <property type="resolution" value="1.80 A"/>
    <property type="chains" value="A=252-691"/>
</dbReference>
<dbReference type="PDB" id="2L8L">
    <property type="method" value="NMR"/>
    <property type="chains" value="A=252-345, A=654-691"/>
</dbReference>
<dbReference type="PDB" id="3IFJ">
    <property type="method" value="X-ray"/>
    <property type="resolution" value="1.90 A"/>
    <property type="chains" value="A/B=252-691"/>
</dbReference>
<dbReference type="PDB" id="3IGD">
    <property type="method" value="X-ray"/>
    <property type="resolution" value="2.40 A"/>
    <property type="chains" value="A=252-691"/>
</dbReference>
<dbReference type="PDB" id="4OQF">
    <property type="method" value="X-ray"/>
    <property type="resolution" value="2.80 A"/>
    <property type="chains" value="A=1-771"/>
</dbReference>
<dbReference type="PDB" id="4PO1">
    <property type="method" value="X-ray"/>
    <property type="resolution" value="3.40 A"/>
    <property type="chains" value="A=1-790"/>
</dbReference>
<dbReference type="PDB" id="4PO8">
    <property type="method" value="X-ray"/>
    <property type="resolution" value="2.70 A"/>
    <property type="chains" value="A=1-790"/>
</dbReference>
<dbReference type="PDB" id="4PO9">
    <property type="method" value="X-ray"/>
    <property type="resolution" value="2.75 A"/>
    <property type="chains" value="A=1-790"/>
</dbReference>
<dbReference type="PDB" id="4POA">
    <property type="method" value="X-ray"/>
    <property type="resolution" value="2.95 A"/>
    <property type="chains" value="A=1-790"/>
</dbReference>
<dbReference type="PDB" id="4PPF">
    <property type="method" value="X-ray"/>
    <property type="resolution" value="2.30 A"/>
    <property type="chains" value="A=1-790"/>
</dbReference>
<dbReference type="PDB" id="4PPG">
    <property type="method" value="X-ray"/>
    <property type="resolution" value="3.00 A"/>
    <property type="chains" value="A=1-790"/>
</dbReference>
<dbReference type="PDB" id="4PPN">
    <property type="method" value="X-ray"/>
    <property type="resolution" value="2.60 A"/>
    <property type="chains" value="A=1-790"/>
</dbReference>
<dbReference type="PDB" id="4PPQ">
    <property type="method" value="X-ray"/>
    <property type="resolution" value="2.85 A"/>
    <property type="chains" value="A=1-790"/>
</dbReference>
<dbReference type="PDB" id="4PQF">
    <property type="method" value="X-ray"/>
    <property type="resolution" value="2.80 A"/>
    <property type="chains" value="A=1-790"/>
</dbReference>
<dbReference type="PDB" id="4PQR">
    <property type="method" value="X-ray"/>
    <property type="resolution" value="2.80 A"/>
    <property type="chains" value="A=1-790"/>
</dbReference>
<dbReference type="PDB" id="4PQY">
    <property type="method" value="X-ray"/>
    <property type="resolution" value="2.95 A"/>
    <property type="chains" value="A=1-790"/>
</dbReference>
<dbReference type="PDB" id="4PR0">
    <property type="method" value="X-ray"/>
    <property type="resolution" value="2.60 A"/>
    <property type="chains" value="A=1-790"/>
</dbReference>
<dbReference type="PDB" id="4PSA">
    <property type="method" value="X-ray"/>
    <property type="resolution" value="2.65 A"/>
    <property type="chains" value="A=1-790"/>
</dbReference>
<dbReference type="PDB" id="4PSK">
    <property type="method" value="X-ray"/>
    <property type="resolution" value="2.80 A"/>
    <property type="chains" value="A=1-790"/>
</dbReference>
<dbReference type="PDB" id="4PSV">
    <property type="method" value="X-ray"/>
    <property type="resolution" value="2.60 A"/>
    <property type="chains" value="A=1-790"/>
</dbReference>
<dbReference type="PDB" id="4PTL">
    <property type="method" value="X-ray"/>
    <property type="resolution" value="2.50 A"/>
    <property type="chains" value="A=1-790"/>
</dbReference>
<dbReference type="PDB" id="5I0A">
    <property type="method" value="X-ray"/>
    <property type="resolution" value="1.50 A"/>
    <property type="chains" value="A=252-696"/>
</dbReference>
<dbReference type="PDB" id="5K08">
    <property type="method" value="X-ray"/>
    <property type="resolution" value="1.40 A"/>
    <property type="chains" value="A=252-694"/>
</dbReference>
<dbReference type="PDBsum" id="1G18"/>
<dbReference type="PDBsum" id="1G19"/>
<dbReference type="PDBsum" id="1MO3"/>
<dbReference type="PDBsum" id="1MO4"/>
<dbReference type="PDBsum" id="1MO5"/>
<dbReference type="PDBsum" id="1MO6"/>
<dbReference type="PDBsum" id="2IMZ"/>
<dbReference type="PDBsum" id="2IN0"/>
<dbReference type="PDBsum" id="2IN8"/>
<dbReference type="PDBsum" id="2IN9"/>
<dbReference type="PDBsum" id="2L8L"/>
<dbReference type="PDBsum" id="3IFJ"/>
<dbReference type="PDBsum" id="3IGD"/>
<dbReference type="PDBsum" id="4OQF"/>
<dbReference type="PDBsum" id="4PO1"/>
<dbReference type="PDBsum" id="4PO8"/>
<dbReference type="PDBsum" id="4PO9"/>
<dbReference type="PDBsum" id="4POA"/>
<dbReference type="PDBsum" id="4PPF"/>
<dbReference type="PDBsum" id="4PPG"/>
<dbReference type="PDBsum" id="4PPN"/>
<dbReference type="PDBsum" id="4PPQ"/>
<dbReference type="PDBsum" id="4PQF"/>
<dbReference type="PDBsum" id="4PQR"/>
<dbReference type="PDBsum" id="4PQY"/>
<dbReference type="PDBsum" id="4PR0"/>
<dbReference type="PDBsum" id="4PSA"/>
<dbReference type="PDBsum" id="4PSK"/>
<dbReference type="PDBsum" id="4PSV"/>
<dbReference type="PDBsum" id="4PTL"/>
<dbReference type="PDBsum" id="5I0A"/>
<dbReference type="PDBsum" id="5K08"/>
<dbReference type="SMR" id="P9WHJ3"/>
<dbReference type="FunCoup" id="P9WHJ3">
    <property type="interactions" value="7"/>
</dbReference>
<dbReference type="STRING" id="83332.Rv2737c"/>
<dbReference type="BindingDB" id="P9WHJ3"/>
<dbReference type="ChEMBL" id="CHEMBL1741171"/>
<dbReference type="MEROPS" id="N10.009"/>
<dbReference type="PaxDb" id="83332-Rv2737c"/>
<dbReference type="GeneID" id="888371"/>
<dbReference type="KEGG" id="mtu:Rv2737c"/>
<dbReference type="KEGG" id="mtv:RVBD_2737c"/>
<dbReference type="TubercuList" id="Rv2737c"/>
<dbReference type="eggNOG" id="COG0468">
    <property type="taxonomic scope" value="Bacteria"/>
</dbReference>
<dbReference type="eggNOG" id="COG1372">
    <property type="taxonomic scope" value="Bacteria"/>
</dbReference>
<dbReference type="InParanoid" id="P9WHJ3"/>
<dbReference type="OrthoDB" id="9776733at2"/>
<dbReference type="PhylomeDB" id="P9WHJ3"/>
<dbReference type="EvolutionaryTrace" id="P9WHJ3"/>
<dbReference type="PRO" id="PR:P9WHJ3"/>
<dbReference type="Proteomes" id="UP000001584">
    <property type="component" value="Chromosome"/>
</dbReference>
<dbReference type="GO" id="GO:0005829">
    <property type="term" value="C:cytosol"/>
    <property type="evidence" value="ECO:0007005"/>
    <property type="project" value="MTBBASE"/>
</dbReference>
<dbReference type="GO" id="GO:0005524">
    <property type="term" value="F:ATP binding"/>
    <property type="evidence" value="ECO:0000314"/>
    <property type="project" value="MTBBASE"/>
</dbReference>
<dbReference type="GO" id="GO:0016887">
    <property type="term" value="F:ATP hydrolysis activity"/>
    <property type="evidence" value="ECO:0000314"/>
    <property type="project" value="MTBBASE"/>
</dbReference>
<dbReference type="GO" id="GO:0008094">
    <property type="term" value="F:ATP-dependent activity, acting on DNA"/>
    <property type="evidence" value="ECO:0000314"/>
    <property type="project" value="MTBBASE"/>
</dbReference>
<dbReference type="GO" id="GO:0140664">
    <property type="term" value="F:ATP-dependent DNA damage sensor activity"/>
    <property type="evidence" value="ECO:0007669"/>
    <property type="project" value="InterPro"/>
</dbReference>
<dbReference type="GO" id="GO:0003684">
    <property type="term" value="F:damaged DNA binding"/>
    <property type="evidence" value="ECO:0007669"/>
    <property type="project" value="UniProtKB-UniRule"/>
</dbReference>
<dbReference type="GO" id="GO:0004520">
    <property type="term" value="F:DNA endonuclease activity"/>
    <property type="evidence" value="ECO:0000314"/>
    <property type="project" value="MTBBASE"/>
</dbReference>
<dbReference type="GO" id="GO:0000150">
    <property type="term" value="F:DNA strand exchange activity"/>
    <property type="evidence" value="ECO:0000314"/>
    <property type="project" value="MTBBASE"/>
</dbReference>
<dbReference type="GO" id="GO:0000287">
    <property type="term" value="F:magnesium ion binding"/>
    <property type="evidence" value="ECO:0000314"/>
    <property type="project" value="MTBBASE"/>
</dbReference>
<dbReference type="GO" id="GO:0030145">
    <property type="term" value="F:manganese ion binding"/>
    <property type="evidence" value="ECO:0000314"/>
    <property type="project" value="MTBBASE"/>
</dbReference>
<dbReference type="GO" id="GO:0003697">
    <property type="term" value="F:single-stranded DNA binding"/>
    <property type="evidence" value="ECO:0000314"/>
    <property type="project" value="MTBBASE"/>
</dbReference>
<dbReference type="GO" id="GO:0006974">
    <property type="term" value="P:DNA damage response"/>
    <property type="evidence" value="ECO:0000316"/>
    <property type="project" value="MTBBASE"/>
</dbReference>
<dbReference type="GO" id="GO:0042148">
    <property type="term" value="P:DNA strand invasion"/>
    <property type="evidence" value="ECO:0000314"/>
    <property type="project" value="MTBBASE"/>
</dbReference>
<dbReference type="GO" id="GO:0016539">
    <property type="term" value="P:intein-mediated protein splicing"/>
    <property type="evidence" value="ECO:0007669"/>
    <property type="project" value="InterPro"/>
</dbReference>
<dbReference type="GO" id="GO:0006314">
    <property type="term" value="P:intron homing"/>
    <property type="evidence" value="ECO:0007669"/>
    <property type="project" value="UniProtKB-KW"/>
</dbReference>
<dbReference type="GO" id="GO:0000725">
    <property type="term" value="P:recombinational repair"/>
    <property type="evidence" value="ECO:0000315"/>
    <property type="project" value="MTBBASE"/>
</dbReference>
<dbReference type="GO" id="GO:0046677">
    <property type="term" value="P:response to antibiotic"/>
    <property type="evidence" value="ECO:0000270"/>
    <property type="project" value="MTBBASE"/>
</dbReference>
<dbReference type="GO" id="GO:0009432">
    <property type="term" value="P:SOS response"/>
    <property type="evidence" value="ECO:0007669"/>
    <property type="project" value="UniProtKB-UniRule"/>
</dbReference>
<dbReference type="GO" id="GO:0009650">
    <property type="term" value="P:UV protection"/>
    <property type="evidence" value="ECO:0000315"/>
    <property type="project" value="MTBBASE"/>
</dbReference>
<dbReference type="CDD" id="cd00081">
    <property type="entry name" value="Hint"/>
    <property type="match status" value="1"/>
</dbReference>
<dbReference type="CDD" id="cd00983">
    <property type="entry name" value="RecA"/>
    <property type="match status" value="1"/>
</dbReference>
<dbReference type="FunFam" id="2.170.16.10:FF:000007">
    <property type="entry name" value="Protein RecA"/>
    <property type="match status" value="1"/>
</dbReference>
<dbReference type="FunFam" id="3.10.28.10:FF:000013">
    <property type="entry name" value="Protein RecA"/>
    <property type="match status" value="1"/>
</dbReference>
<dbReference type="FunFam" id="3.30.250.10:FF:000001">
    <property type="entry name" value="Protein RecA"/>
    <property type="match status" value="1"/>
</dbReference>
<dbReference type="FunFam" id="3.40.50.300:FF:002436">
    <property type="entry name" value="Protein RecA"/>
    <property type="match status" value="1"/>
</dbReference>
<dbReference type="Gene3D" id="2.170.16.10">
    <property type="entry name" value="Hedgehog/Intein (Hint) domain"/>
    <property type="match status" value="2"/>
</dbReference>
<dbReference type="Gene3D" id="3.10.28.10">
    <property type="entry name" value="Homing endonucleases"/>
    <property type="match status" value="1"/>
</dbReference>
<dbReference type="Gene3D" id="3.40.50.300">
    <property type="entry name" value="P-loop containing nucleotide triphosphate hydrolases"/>
    <property type="match status" value="1"/>
</dbReference>
<dbReference type="Gene3D" id="3.30.250.10">
    <property type="entry name" value="RecA protein, C-terminal domain"/>
    <property type="match status" value="1"/>
</dbReference>
<dbReference type="HAMAP" id="MF_00268">
    <property type="entry name" value="RecA"/>
    <property type="match status" value="1"/>
</dbReference>
<dbReference type="InterPro" id="IPR003593">
    <property type="entry name" value="AAA+_ATPase"/>
</dbReference>
<dbReference type="InterPro" id="IPR013765">
    <property type="entry name" value="DNA_recomb/repair_RecA"/>
</dbReference>
<dbReference type="InterPro" id="IPR020584">
    <property type="entry name" value="DNA_recomb/repair_RecA_CS"/>
</dbReference>
<dbReference type="InterPro" id="IPR003586">
    <property type="entry name" value="Hint_dom_C"/>
</dbReference>
<dbReference type="InterPro" id="IPR003587">
    <property type="entry name" value="Hint_dom_N"/>
</dbReference>
<dbReference type="InterPro" id="IPR036844">
    <property type="entry name" value="Hint_dom_sf"/>
</dbReference>
<dbReference type="InterPro" id="IPR027434">
    <property type="entry name" value="Homing_endonucl"/>
</dbReference>
<dbReference type="InterPro" id="IPR006142">
    <property type="entry name" value="INTEIN"/>
</dbReference>
<dbReference type="InterPro" id="IPR030934">
    <property type="entry name" value="Intein_C"/>
</dbReference>
<dbReference type="InterPro" id="IPR004042">
    <property type="entry name" value="Intein_endonuc_central"/>
</dbReference>
<dbReference type="InterPro" id="IPR006141">
    <property type="entry name" value="Intein_N"/>
</dbReference>
<dbReference type="InterPro" id="IPR004860">
    <property type="entry name" value="LAGLIDADG_dom"/>
</dbReference>
<dbReference type="InterPro" id="IPR027417">
    <property type="entry name" value="P-loop_NTPase"/>
</dbReference>
<dbReference type="InterPro" id="IPR049261">
    <property type="entry name" value="RecA-like_C"/>
</dbReference>
<dbReference type="InterPro" id="IPR049428">
    <property type="entry name" value="RecA-like_N"/>
</dbReference>
<dbReference type="InterPro" id="IPR020588">
    <property type="entry name" value="RecA_ATP-bd"/>
</dbReference>
<dbReference type="InterPro" id="IPR023400">
    <property type="entry name" value="RecA_C_sf"/>
</dbReference>
<dbReference type="InterPro" id="IPR020587">
    <property type="entry name" value="RecA_monomer-monomer_interface"/>
</dbReference>
<dbReference type="NCBIfam" id="TIGR01443">
    <property type="entry name" value="intein_Cterm"/>
    <property type="match status" value="1"/>
</dbReference>
<dbReference type="NCBIfam" id="TIGR01445">
    <property type="entry name" value="intein_Nterm"/>
    <property type="match status" value="1"/>
</dbReference>
<dbReference type="NCBIfam" id="NF007072">
    <property type="entry name" value="PRK09519.1"/>
    <property type="match status" value="1"/>
</dbReference>
<dbReference type="NCBIfam" id="TIGR02012">
    <property type="entry name" value="tigrfam_recA"/>
    <property type="match status" value="1"/>
</dbReference>
<dbReference type="PANTHER" id="PTHR45900:SF1">
    <property type="entry name" value="MITOCHONDRIAL DNA REPAIR PROTEIN RECA HOMOLOG-RELATED"/>
    <property type="match status" value="1"/>
</dbReference>
<dbReference type="PANTHER" id="PTHR45900">
    <property type="entry name" value="RECA"/>
    <property type="match status" value="1"/>
</dbReference>
<dbReference type="Pfam" id="PF14890">
    <property type="entry name" value="Intein_splicing"/>
    <property type="match status" value="1"/>
</dbReference>
<dbReference type="Pfam" id="PF14528">
    <property type="entry name" value="LAGLIDADG_3"/>
    <property type="match status" value="1"/>
</dbReference>
<dbReference type="Pfam" id="PF00154">
    <property type="entry name" value="RecA"/>
    <property type="match status" value="1"/>
</dbReference>
<dbReference type="Pfam" id="PF21096">
    <property type="entry name" value="RecA_C"/>
    <property type="match status" value="1"/>
</dbReference>
<dbReference type="PRINTS" id="PR00379">
    <property type="entry name" value="INTEIN"/>
</dbReference>
<dbReference type="PRINTS" id="PR00142">
    <property type="entry name" value="RECA"/>
</dbReference>
<dbReference type="SMART" id="SM00382">
    <property type="entry name" value="AAA"/>
    <property type="match status" value="1"/>
</dbReference>
<dbReference type="SMART" id="SM00305">
    <property type="entry name" value="HintC"/>
    <property type="match status" value="1"/>
</dbReference>
<dbReference type="SMART" id="SM00306">
    <property type="entry name" value="HintN"/>
    <property type="match status" value="1"/>
</dbReference>
<dbReference type="SUPFAM" id="SSF51294">
    <property type="entry name" value="Hedgehog/intein (Hint) domain"/>
    <property type="match status" value="1"/>
</dbReference>
<dbReference type="SUPFAM" id="SSF55608">
    <property type="entry name" value="Homing endonucleases"/>
    <property type="match status" value="1"/>
</dbReference>
<dbReference type="SUPFAM" id="SSF52540">
    <property type="entry name" value="P-loop containing nucleoside triphosphate hydrolases"/>
    <property type="match status" value="1"/>
</dbReference>
<dbReference type="SUPFAM" id="SSF54752">
    <property type="entry name" value="RecA protein, C-terminal domain"/>
    <property type="match status" value="1"/>
</dbReference>
<dbReference type="PROSITE" id="PS50818">
    <property type="entry name" value="INTEIN_C_TER"/>
    <property type="match status" value="1"/>
</dbReference>
<dbReference type="PROSITE" id="PS50819">
    <property type="entry name" value="INTEIN_ENDONUCLEASE"/>
    <property type="match status" value="1"/>
</dbReference>
<dbReference type="PROSITE" id="PS50817">
    <property type="entry name" value="INTEIN_N_TER"/>
    <property type="match status" value="1"/>
</dbReference>
<dbReference type="PROSITE" id="PS00321">
    <property type="entry name" value="RECA_1"/>
    <property type="match status" value="1"/>
</dbReference>
<dbReference type="PROSITE" id="PS50162">
    <property type="entry name" value="RECA_2"/>
    <property type="match status" value="1"/>
</dbReference>
<dbReference type="PROSITE" id="PS50163">
    <property type="entry name" value="RECA_3"/>
    <property type="match status" value="2"/>
</dbReference>
<reference key="1">
    <citation type="journal article" date="1991" name="J. Bacteriol.">
        <title>Novel structure of the recA locus of Mycobacterium tuberculosis implies processing of the gene product.</title>
        <authorList>
            <person name="Davis E.O."/>
            <person name="Sedgwick S.G."/>
            <person name="Colston M.J."/>
        </authorList>
    </citation>
    <scope>NUCLEOTIDE SEQUENCE [GENOMIC DNA]</scope>
    <source>
        <strain>ATCC 25618 / H37Rv</strain>
    </source>
</reference>
<reference key="2">
    <citation type="submission" date="1997-07" db="EMBL/GenBank/DDBJ databases">
        <authorList>
            <person name="Vansoolingen D."/>
            <person name="Hoogenboezem T."/>
            <person name="Dehaas P.E."/>
            <person name="Hermans P.W.M."/>
        </authorList>
    </citation>
    <scope>NUCLEOTIDE SEQUENCE [GENOMIC DNA]</scope>
    <source>
        <strain>Canetti</strain>
        <strain>SO93</strain>
    </source>
</reference>
<reference key="3">
    <citation type="journal article" date="1998" name="Nature">
        <title>Deciphering the biology of Mycobacterium tuberculosis from the complete genome sequence.</title>
        <authorList>
            <person name="Cole S.T."/>
            <person name="Brosch R."/>
            <person name="Parkhill J."/>
            <person name="Garnier T."/>
            <person name="Churcher C.M."/>
            <person name="Harris D.E."/>
            <person name="Gordon S.V."/>
            <person name="Eiglmeier K."/>
            <person name="Gas S."/>
            <person name="Barry C.E. III"/>
            <person name="Tekaia F."/>
            <person name="Badcock K."/>
            <person name="Basham D."/>
            <person name="Brown D."/>
            <person name="Chillingworth T."/>
            <person name="Connor R."/>
            <person name="Davies R.M."/>
            <person name="Devlin K."/>
            <person name="Feltwell T."/>
            <person name="Gentles S."/>
            <person name="Hamlin N."/>
            <person name="Holroyd S."/>
            <person name="Hornsby T."/>
            <person name="Jagels K."/>
            <person name="Krogh A."/>
            <person name="McLean J."/>
            <person name="Moule S."/>
            <person name="Murphy L.D."/>
            <person name="Oliver S."/>
            <person name="Osborne J."/>
            <person name="Quail M.A."/>
            <person name="Rajandream M.A."/>
            <person name="Rogers J."/>
            <person name="Rutter S."/>
            <person name="Seeger K."/>
            <person name="Skelton S."/>
            <person name="Squares S."/>
            <person name="Squares R."/>
            <person name="Sulston J.E."/>
            <person name="Taylor K."/>
            <person name="Whitehead S."/>
            <person name="Barrell B.G."/>
        </authorList>
    </citation>
    <scope>NUCLEOTIDE SEQUENCE [LARGE SCALE GENOMIC DNA]</scope>
    <source>
        <strain>ATCC 25618 / H37Rv</strain>
    </source>
</reference>
<reference key="4">
    <citation type="journal article" date="1992" name="Cell">
        <title>Protein splicing in the maturation of M. tuberculosis recA protein: a mechanism for tolerating a novel class of intervening sequence.</title>
        <authorList>
            <person name="Davis E.O."/>
            <person name="Jenner P.J."/>
            <person name="Brooks P.C."/>
            <person name="Colston M.J."/>
            <person name="Sedgwick S.G."/>
        </authorList>
    </citation>
    <scope>PROTEIN SPLICING</scope>
</reference>
<reference key="5">
    <citation type="journal article" date="1996" name="Biochemistry">
        <title>Functional characterization of the precursor and spliced forms of RecA protein of Mycobacterium tuberculosis.</title>
        <authorList>
            <person name="Kumar R.A."/>
            <person name="Vaze M.B."/>
            <person name="Chandra N.R."/>
            <person name="Vijayan M."/>
            <person name="Muniyappa K."/>
        </authorList>
    </citation>
    <scope>CHARACTERIZATION</scope>
</reference>
<reference key="6">
    <citation type="book" date="1994" name="Tuberculosis: pathogenesis, protection and control">
        <editorList>
            <person name="Bloom B.R."/>
        </editorList>
        <authorList>
            <person name="Colston M.J."/>
            <person name="Davis E.O."/>
        </authorList>
    </citation>
    <scope>REVIEW</scope>
</reference>
<reference key="7">
    <citation type="journal article" date="2010" name="Biochemistry">
        <title>Mycobacterium tuberculosis UvrD1 and UvrA proteins suppress DNA strand exchange promoted by cognate and noncognate RecA proteins.</title>
        <authorList>
            <person name="Singh P."/>
            <person name="Patil K.N."/>
            <person name="Khanduja J.S."/>
            <person name="Kumar P.S."/>
            <person name="Williams A."/>
            <person name="Rossi F."/>
            <person name="Rizzi M."/>
            <person name="Davis E.O."/>
            <person name="Muniyappa K."/>
        </authorList>
    </citation>
    <scope>INTERACTION WITH UVRD1 AND UVRA</scope>
    <source>
        <strain>ATCC 25618 / H37Rv</strain>
    </source>
</reference>
<reference key="8">
    <citation type="journal article" date="2010" name="PLoS ONE">
        <title>Prokaryotic ubiquitin-like protein (Pup) proteome of Mycobacterium tuberculosis.</title>
        <authorList>
            <person name="Festa R.A."/>
            <person name="McAllister F."/>
            <person name="Pearce M.J."/>
            <person name="Mintseris J."/>
            <person name="Burns K.E."/>
            <person name="Gygi S.P."/>
            <person name="Darwin K.H."/>
        </authorList>
    </citation>
    <scope>PUPYLATION AT LYS-762</scope>
    <scope>IDENTIFICATION BY MASS SPECTROMETRY</scope>
    <source>
        <strain>ATCC 25618 / H37Rv</strain>
    </source>
</reference>
<reference key="9">
    <citation type="journal article" date="2011" name="Mol. Cell. Proteomics">
        <title>Proteogenomic analysis of Mycobacterium tuberculosis by high resolution mass spectrometry.</title>
        <authorList>
            <person name="Kelkar D.S."/>
            <person name="Kumar D."/>
            <person name="Kumar P."/>
            <person name="Balakrishnan L."/>
            <person name="Muthusamy B."/>
            <person name="Yadav A.K."/>
            <person name="Shrivastava P."/>
            <person name="Marimuthu A."/>
            <person name="Anand S."/>
            <person name="Sundaram H."/>
            <person name="Kingsbury R."/>
            <person name="Harsha H.C."/>
            <person name="Nair B."/>
            <person name="Prasad T.S."/>
            <person name="Chauhan D.S."/>
            <person name="Katoch K."/>
            <person name="Katoch V.M."/>
            <person name="Kumar P."/>
            <person name="Chaerkady R."/>
            <person name="Ramachandran S."/>
            <person name="Dash D."/>
            <person name="Pandey A."/>
        </authorList>
    </citation>
    <scope>IDENTIFICATION BY MASS SPECTROMETRY [LARGE SCALE ANALYSIS]</scope>
    <source>
        <strain>ATCC 25618 / H37Rv</strain>
    </source>
</reference>
<reference key="10">
    <citation type="journal article" date="2020" name="Mol. Microbiol.">
        <title>Depletion of the DarG antitoxin in Mycobacterium tuberculosis triggers the DNA-damage response and leads to cell death.</title>
        <authorList>
            <person name="Zaveri A."/>
            <person name="Wang R."/>
            <person name="Botella L."/>
            <person name="Sharma R."/>
            <person name="Zhu L."/>
            <person name="Wallach J.B."/>
            <person name="Song N."/>
            <person name="Jansen R.S."/>
            <person name="Rhee K.Y."/>
            <person name="Ehrt S."/>
            <person name="Schnappinger D."/>
        </authorList>
    </citation>
    <scope>SUBUNIT</scope>
    <source>
        <strain>H37Rv</strain>
    </source>
</reference>
<reference key="11">
    <citation type="journal article" date="2021" name="Nature">
        <title>Molecular basis for DarT ADP-ribosylation of a DNA base.</title>
        <authorList>
            <person name="Schuller M."/>
            <person name="Butler R.E."/>
            <person name="Ariza A."/>
            <person name="Tromans-Coia C."/>
            <person name="Jankevicius G."/>
            <person name="Claridge T.D.W."/>
            <person name="Kendall S.L."/>
            <person name="Goh S."/>
            <person name="Stewart G.R."/>
            <person name="Ahel I."/>
        </authorList>
    </citation>
    <scope>INDUCTION BY DNA DAMAGE AND BY DART</scope>
    <source>
        <strain>H37Rv</strain>
    </source>
</reference>
<reference key="12">
    <citation type="journal article" date="2000" name="Nucleic Acids Res.">
        <title>Crystal structures of Mycobacterium tuberculosis RecA and its complex with ADP-AlF(4): implications for decreased ATPase activity and molecular aggregation.</title>
        <authorList>
            <person name="Datta S."/>
            <person name="Prabu M.M."/>
            <person name="Vaze M.B."/>
            <person name="Ganesh N."/>
            <person name="Chandra N.R."/>
            <person name="Muniyappa K."/>
            <person name="Vijayan M."/>
        </authorList>
    </citation>
    <scope>X-RAY CRYSTALLOGRAPHY (3.0 ANGSTROMS)</scope>
</reference>
<feature type="chain" id="PRO_0000030269" description="Protein RecA, 1st part">
    <location>
        <begin position="1"/>
        <end position="251"/>
    </location>
</feature>
<feature type="chain" id="PRO_0000030270" description="Endonuclease PI-MtuI">
    <location>
        <begin position="252"/>
        <end position="691"/>
    </location>
</feature>
<feature type="chain" id="PRO_0000030271" description="Protein RecA, 2nd part">
    <location>
        <begin position="692"/>
        <end position="790"/>
    </location>
</feature>
<feature type="domain" description="DOD-type homing endonuclease">
    <location>
        <begin position="366"/>
        <end position="508"/>
    </location>
</feature>
<feature type="binding site" evidence="1">
    <location>
        <begin position="67"/>
        <end position="74"/>
    </location>
    <ligand>
        <name>ATP</name>
        <dbReference type="ChEBI" id="CHEBI:30616"/>
    </ligand>
</feature>
<feature type="cross-link" description="Isoglutamyl lysine isopeptide (Lys-Gln) (interchain with Q-Cter in protein Pup)" evidence="2">
    <location>
        <position position="762"/>
    </location>
</feature>
<feature type="sequence variant" description="In strain: Canetti and SO93.">
    <original>R</original>
    <variation>Q</variation>
    <location>
        <position position="305"/>
    </location>
</feature>
<feature type="sequence variant" description="In strain: Canetti and SO93.">
    <original>A</original>
    <variation>L</variation>
    <location>
        <position position="430"/>
    </location>
</feature>
<feature type="sequence variant" description="In strain: Canetti and SO93.">
    <original>QQ</original>
    <variation>RR</variation>
    <location>
        <begin position="434"/>
        <end position="435"/>
    </location>
</feature>
<feature type="sequence variant" description="In strain: Canetti and SO93.">
    <original>IY</original>
    <variation>VH</variation>
    <location>
        <begin position="438"/>
        <end position="439"/>
    </location>
</feature>
<feature type="helix" evidence="10">
    <location>
        <begin position="5"/>
        <end position="22"/>
    </location>
</feature>
<feature type="helix" evidence="9">
    <location>
        <begin position="24"/>
        <end position="26"/>
    </location>
</feature>
<feature type="helix" evidence="10">
    <location>
        <begin position="46"/>
        <end position="51"/>
    </location>
</feature>
<feature type="strand" evidence="10">
    <location>
        <begin position="53"/>
        <end position="58"/>
    </location>
</feature>
<feature type="strand" evidence="10">
    <location>
        <begin position="61"/>
        <end position="68"/>
    </location>
</feature>
<feature type="helix" evidence="10">
    <location>
        <begin position="73"/>
        <end position="86"/>
    </location>
</feature>
<feature type="strand" evidence="10">
    <location>
        <begin position="91"/>
        <end position="97"/>
    </location>
</feature>
<feature type="helix" evidence="10">
    <location>
        <begin position="102"/>
        <end position="108"/>
    </location>
</feature>
<feature type="helix" evidence="10">
    <location>
        <begin position="112"/>
        <end position="114"/>
    </location>
</feature>
<feature type="strand" evidence="10">
    <location>
        <begin position="116"/>
        <end position="118"/>
    </location>
</feature>
<feature type="helix" evidence="10">
    <location>
        <begin position="123"/>
        <end position="135"/>
    </location>
</feature>
<feature type="strand" evidence="10">
    <location>
        <begin position="140"/>
        <end position="145"/>
    </location>
</feature>
<feature type="helix" evidence="10">
    <location>
        <begin position="147"/>
        <end position="149"/>
    </location>
</feature>
<feature type="helix" evidence="10">
    <location>
        <begin position="153"/>
        <end position="156"/>
    </location>
</feature>
<feature type="helix" evidence="10">
    <location>
        <begin position="167"/>
        <end position="186"/>
    </location>
</feature>
<feature type="strand" evidence="10">
    <location>
        <begin position="189"/>
        <end position="195"/>
    </location>
</feature>
<feature type="helix" evidence="10">
    <location>
        <begin position="213"/>
        <end position="219"/>
    </location>
</feature>
<feature type="strand" evidence="10">
    <location>
        <begin position="221"/>
        <end position="234"/>
    </location>
</feature>
<feature type="strand" evidence="10">
    <location>
        <begin position="237"/>
        <end position="252"/>
    </location>
</feature>
<feature type="strand" evidence="11">
    <location>
        <begin position="258"/>
        <end position="260"/>
    </location>
</feature>
<feature type="turn" evidence="11">
    <location>
        <begin position="262"/>
        <end position="264"/>
    </location>
</feature>
<feature type="strand" evidence="11">
    <location>
        <begin position="267"/>
        <end position="269"/>
    </location>
</feature>
<feature type="helix" evidence="11">
    <location>
        <begin position="270"/>
        <end position="275"/>
    </location>
</feature>
<feature type="strand" evidence="11">
    <location>
        <begin position="281"/>
        <end position="285"/>
    </location>
</feature>
<feature type="strand" evidence="8">
    <location>
        <begin position="287"/>
        <end position="289"/>
    </location>
</feature>
<feature type="strand" evidence="11">
    <location>
        <begin position="291"/>
        <end position="312"/>
    </location>
</feature>
<feature type="strand" evidence="11">
    <location>
        <begin position="317"/>
        <end position="320"/>
    </location>
</feature>
<feature type="strand" evidence="11">
    <location>
        <begin position="325"/>
        <end position="328"/>
    </location>
</feature>
<feature type="strand" evidence="11">
    <location>
        <begin position="331"/>
        <end position="334"/>
    </location>
</feature>
<feature type="helix" evidence="11">
    <location>
        <begin position="335"/>
        <end position="337"/>
    </location>
</feature>
<feature type="strand" evidence="11">
    <location>
        <begin position="343"/>
        <end position="345"/>
    </location>
</feature>
<feature type="turn" evidence="7">
    <location>
        <begin position="349"/>
        <end position="351"/>
    </location>
</feature>
<feature type="strand" evidence="7">
    <location>
        <begin position="655"/>
        <end position="676"/>
    </location>
</feature>
<feature type="turn" evidence="7">
    <location>
        <begin position="677"/>
        <end position="679"/>
    </location>
</feature>
<feature type="strand" evidence="7">
    <location>
        <begin position="681"/>
        <end position="684"/>
    </location>
</feature>
<feature type="strand" evidence="7">
    <location>
        <begin position="687"/>
        <end position="690"/>
    </location>
</feature>
<feature type="strand" evidence="10">
    <location>
        <begin position="698"/>
        <end position="704"/>
    </location>
</feature>
<feature type="turn" evidence="10">
    <location>
        <begin position="705"/>
        <end position="707"/>
    </location>
</feature>
<feature type="helix" evidence="10">
    <location>
        <begin position="711"/>
        <end position="721"/>
    </location>
</feature>
<feature type="strand" evidence="10">
    <location>
        <begin position="724"/>
        <end position="728"/>
    </location>
</feature>
<feature type="strand" evidence="10">
    <location>
        <begin position="731"/>
        <end position="734"/>
    </location>
</feature>
<feature type="strand" evidence="10">
    <location>
        <begin position="737"/>
        <end position="742"/>
    </location>
</feature>
<feature type="helix" evidence="10">
    <location>
        <begin position="743"/>
        <end position="752"/>
    </location>
</feature>
<feature type="helix" evidence="10">
    <location>
        <begin position="754"/>
        <end position="767"/>
    </location>
</feature>
<comment type="function">
    <text>Can catalyze the hydrolysis of ATP in the presence of single-stranded DNA, the ATP-dependent uptake of single-stranded DNA by duplex DNA, and the ATP-dependent hybridization of homologous single-stranded DNAs. It interacts with LexA causing its activation and leading to its autocatalytic cleavage.</text>
</comment>
<comment type="function">
    <text>PI-MtuI is an endonuclease.</text>
</comment>
<comment type="subunit">
    <text evidence="3 4">Interacts with UvrD1 and UvrA (PubMed:20455546). Co-immunoprecipitates with DarG in the presence and absence of darT (PubMed:32634279).</text>
</comment>
<comment type="subcellular location">
    <subcellularLocation>
        <location evidence="1">Cytoplasm</location>
    </subcellularLocation>
</comment>
<comment type="induction">
    <text evidence="5">By DNA damage, and by ADP-ribosylation catalyzed by DarT (at protein level).</text>
</comment>
<comment type="PTM">
    <text>This protein undergoes a protein self splicing that involves a post-translational excision of the intervening region (intein) followed by peptide ligation.</text>
</comment>
<comment type="similarity">
    <text evidence="6">Belongs to the RecA family.</text>
</comment>
<protein>
    <recommendedName>
        <fullName>Protein RecA</fullName>
    </recommendedName>
    <alternativeName>
        <fullName>Recombinase A</fullName>
    </alternativeName>
    <component>
        <recommendedName>
            <fullName>Endonuclease PI-MtuI</fullName>
            <ecNumber>3.1.-.-</ecNumber>
        </recommendedName>
        <alternativeName>
            <fullName>Mtu RecA intein</fullName>
        </alternativeName>
    </component>
</protein>
<sequence>MTQTPDREKALELAVAQIEKSYGKGSVMRLGDEARQPISVIPTGSIALDVALGIGGLPRGRVIEIYGPESSGKTTVALHAVANAQAAGGVAAFIDAEHALDPDYAKKLGVDTDSLLVSQPDTGEQALEIADMLIRSGALDIVVIDSVAALVPRAELEGEMGDSHVGLQARLMSQALRKMTGALNNSGTTAIFINQLRDKIGVMFGSPETTTGGKALKFYASVRMDVRRVETLKDGTNAVGNRTRVKVVKNKCLAEGTRIFDPVTGTTHRIEDVVDGRKPIHVVAAAKDGTLHARPVVSWFDQGTRDVIGLRIAGGAIVWATPDHKVLTEYGWRAAGELRKGDRVAQPRRFDGFGDSAPIPADHARLLGYLIGDGRDGWVGGKTPINFINVQRALIDDVTRIAATLGCAAHPQGRISLAIAHRPGERNGVADLCQQAGIYGKLAWEKTIPNWFFEPDIAADIVGNLLFGLFESDGWVSREQTGALRVGYTTTSEQLAHQIHWLLLRFGVGSTVRDYDPTQKRPSIVNGRRIQSKRQVFEVRISGMDNVTAFAESVPMWGPRGAALIQAIPEATQGRRRGSQATYLAAEMTDAVLNYLDERGVTAQEAAAMIGVASGDPRGGMKQVLGASRLRRDRVQALADALDDKFLHDMLAEELRYSVIREVLPTRRARTFDLEVEELHTLVAEGVVVHNCSPPFKQAEFDILYGKGISREGSLIDMGVDQGLIRKSGAWFTYEGEQLGQGKENARNFLVENADVADEIEKKIKEKLGIGAVVTDDPSNDGVLPAPVDF</sequence>
<proteinExistence type="evidence at protein level"/>